<evidence type="ECO:0000250" key="1"/>
<evidence type="ECO:0000255" key="2"/>
<evidence type="ECO:0000255" key="3">
    <source>
        <dbReference type="PROSITE-ProRule" id="PRU00274"/>
    </source>
</evidence>
<evidence type="ECO:0000269" key="4">
    <source>
    </source>
</evidence>
<evidence type="ECO:0000305" key="5"/>
<evidence type="ECO:0000305" key="6">
    <source>
    </source>
</evidence>
<sequence length="234" mass="25352">VIGGDECNINEHRSLVAFFNSTGFFCSGTLVNEEWVLSAAHCDSTNFQMKLGVHSKKVLNEDEQTRNPKEKFICPNKKNDEVLDKDIMLIKLDSRVSNSEHIAPLSLPSSPPSVGSVCHIMGWGSITPIKETYPDVPYCANINLLDDEVCQAGYPELLAEYRTLCAGILEGGKDTCGGDSGGPLICNGQFQGIVSYGAHPCGQSLKPGIYTKVFDYSDWIQSIIAGNTDASCPP</sequence>
<protein>
    <recommendedName>
        <fullName>Bradykinin-releasing enzyme KR-E-1</fullName>
    </recommendedName>
    <alternativeName>
        <fullName>Snake venom serine protease</fullName>
        <shortName>SVSP</shortName>
    </alternativeName>
    <alternativeName>
        <fullName>Thrombin-like enzyme defibrase</fullName>
        <ecNumber>3.4.21.-</ecNumber>
    </alternativeName>
</protein>
<comment type="function">
    <text evidence="4">Bradykinin-releasing enzyme. Releases bradykinin from bovine HMW kininogen. Has anticoagulant activity. Increases permeability of capillaries by intradermal injection into rabbits.</text>
</comment>
<comment type="subunit">
    <text evidence="1">Monomer.</text>
</comment>
<comment type="subcellular location">
    <subcellularLocation>
        <location>Secreted</location>
    </subcellularLocation>
</comment>
<comment type="tissue specificity">
    <text>Expressed by the venom gland.</text>
</comment>
<comment type="miscellaneous">
    <text evidence="6">Negative results: does not show a thrombin-like activity.</text>
</comment>
<comment type="similarity">
    <text evidence="3">Belongs to the peptidase S1 family. Snake venom subfamily.</text>
</comment>
<feature type="chain" id="PRO_0000295820" description="Bradykinin-releasing enzyme KR-E-1">
    <location>
        <begin position="1"/>
        <end position="234"/>
    </location>
</feature>
<feature type="domain" description="Peptidase S1" evidence="3">
    <location>
        <begin position="1"/>
        <end position="225"/>
    </location>
</feature>
<feature type="active site" description="Charge relay system" evidence="1">
    <location>
        <position position="41"/>
    </location>
</feature>
<feature type="active site" description="Charge relay system" evidence="1">
    <location>
        <position position="86"/>
    </location>
</feature>
<feature type="active site" description="Charge relay system" evidence="1">
    <location>
        <position position="180"/>
    </location>
</feature>
<feature type="glycosylation site" description="N-linked (GlcNAc...) asparagine" evidence="2">
    <location>
        <position position="20"/>
    </location>
</feature>
<feature type="disulfide bond" evidence="3">
    <location>
        <begin position="7"/>
        <end position="139"/>
    </location>
</feature>
<feature type="disulfide bond" evidence="3">
    <location>
        <begin position="26"/>
        <end position="42"/>
    </location>
</feature>
<feature type="disulfide bond" evidence="3">
    <location>
        <begin position="74"/>
        <end position="232"/>
    </location>
</feature>
<feature type="disulfide bond" evidence="3">
    <location>
        <begin position="118"/>
        <end position="186"/>
    </location>
</feature>
<feature type="disulfide bond" evidence="3">
    <location>
        <begin position="150"/>
        <end position="165"/>
    </location>
</feature>
<feature type="disulfide bond" evidence="3">
    <location>
        <begin position="176"/>
        <end position="201"/>
    </location>
</feature>
<feature type="sequence conflict" description="In Ref. 2; AA sequence." evidence="5" ref="2">
    <original>I</original>
    <variation>V</variation>
    <location>
        <position position="2"/>
    </location>
</feature>
<feature type="sequence conflict" description="In Ref. 2; AA sequence." evidence="5" ref="2">
    <original>N</original>
    <variation>T</variation>
    <location>
        <position position="98"/>
    </location>
</feature>
<feature type="sequence conflict" description="In Ref. 2; AA sequence." evidence="5" ref="2">
    <original>N</original>
    <variation>Y</variation>
    <location>
        <position position="141"/>
    </location>
</feature>
<feature type="sequence conflict" description="In Ref. 2; AA sequence." evidence="5" ref="2">
    <original>S</original>
    <variation>G</variation>
    <location>
        <position position="204"/>
    </location>
</feature>
<feature type="sequence conflict" description="In Ref. 2; AA sequence." evidence="5" ref="2">
    <original>DASCPP</original>
    <variation>AATCSSF</variation>
    <location>
        <begin position="229"/>
        <end position="234"/>
    </location>
</feature>
<accession>Q7SZE2</accession>
<accession>P86171</accession>
<proteinExistence type="evidence at protein level"/>
<reference key="1">
    <citation type="submission" date="2002-12" db="EMBL/GenBank/DDBJ databases">
        <authorList>
            <person name="Sun D.-J."/>
            <person name="Yang T.-S."/>
        </authorList>
    </citation>
    <scope>NUCLEOTIDE SEQUENCE [MRNA]</scope>
    <source>
        <tissue>Venom gland</tissue>
    </source>
</reference>
<reference key="2">
    <citation type="journal article" date="2008" name="Toxicon">
        <title>Amino acid sequence of a kinin-releasing enzyme, KR-E-1, from the venom of Agkistrodon caliginosus (Kankoku-mamushi).</title>
        <authorList>
            <person name="Oyama E."/>
            <person name="Fukuda T."/>
            <person name="Takahashi H."/>
        </authorList>
    </citation>
    <scope>PROTEIN SEQUENCE</scope>
    <source>
        <tissue>Venom</tissue>
    </source>
</reference>
<reference key="3">
    <citation type="journal article" date="1988" name="Toxicon">
        <title>Purification of a kininogenase from the venom of Agkistrodon caliginosus (Kankoku-Mamushi).</title>
        <authorList>
            <person name="Ohtani Y."/>
            <person name="Yabuki Y."/>
            <person name="Mimura M."/>
            <person name="Takahashi H."/>
        </authorList>
    </citation>
    <scope>FUNCTION</scope>
    <source>
        <tissue>Venom</tissue>
    </source>
</reference>
<keyword id="KW-0903">Direct protein sequencing</keyword>
<keyword id="KW-1015">Disulfide bond</keyword>
<keyword id="KW-0325">Glycoprotein</keyword>
<keyword id="KW-0378">Hydrolase</keyword>
<keyword id="KW-0645">Protease</keyword>
<keyword id="KW-0964">Secreted</keyword>
<keyword id="KW-0720">Serine protease</keyword>
<keyword id="KW-0800">Toxin</keyword>
<name>VSPD_GLOUS</name>
<organism>
    <name type="scientific">Gloydius ussuriensis</name>
    <name type="common">Ussuri mamushi</name>
    <name type="synonym">Gloydius blomhoffii ussuriensis</name>
    <dbReference type="NCBI Taxonomy" id="35671"/>
    <lineage>
        <taxon>Eukaryota</taxon>
        <taxon>Metazoa</taxon>
        <taxon>Chordata</taxon>
        <taxon>Craniata</taxon>
        <taxon>Vertebrata</taxon>
        <taxon>Euteleostomi</taxon>
        <taxon>Lepidosauria</taxon>
        <taxon>Squamata</taxon>
        <taxon>Bifurcata</taxon>
        <taxon>Unidentata</taxon>
        <taxon>Episquamata</taxon>
        <taxon>Toxicofera</taxon>
        <taxon>Serpentes</taxon>
        <taxon>Colubroidea</taxon>
        <taxon>Viperidae</taxon>
        <taxon>Crotalinae</taxon>
        <taxon>Gloydius</taxon>
    </lineage>
</organism>
<dbReference type="EC" id="3.4.21.-"/>
<dbReference type="EMBL" id="AY204242">
    <property type="protein sequence ID" value="AAP20637.1"/>
    <property type="molecule type" value="mRNA"/>
</dbReference>
<dbReference type="SMR" id="Q7SZE2"/>
<dbReference type="MEROPS" id="S01.023"/>
<dbReference type="GO" id="GO:0005576">
    <property type="term" value="C:extracellular region"/>
    <property type="evidence" value="ECO:0000314"/>
    <property type="project" value="UniProtKB"/>
</dbReference>
<dbReference type="GO" id="GO:0030141">
    <property type="term" value="C:secretory granule"/>
    <property type="evidence" value="ECO:0007669"/>
    <property type="project" value="TreeGrafter"/>
</dbReference>
<dbReference type="GO" id="GO:0004252">
    <property type="term" value="F:serine-type endopeptidase activity"/>
    <property type="evidence" value="ECO:0007669"/>
    <property type="project" value="InterPro"/>
</dbReference>
<dbReference type="GO" id="GO:0008236">
    <property type="term" value="F:serine-type peptidase activity"/>
    <property type="evidence" value="ECO:0000314"/>
    <property type="project" value="UniProtKB"/>
</dbReference>
<dbReference type="GO" id="GO:0090729">
    <property type="term" value="F:toxin activity"/>
    <property type="evidence" value="ECO:0000314"/>
    <property type="project" value="UniProtKB"/>
</dbReference>
<dbReference type="GO" id="GO:0035821">
    <property type="term" value="P:modulation of process of another organism"/>
    <property type="evidence" value="ECO:0000314"/>
    <property type="project" value="UniProtKB"/>
</dbReference>
<dbReference type="GO" id="GO:0002353">
    <property type="term" value="P:plasma kallikrein-kinin cascade"/>
    <property type="evidence" value="ECO:0000314"/>
    <property type="project" value="UniProtKB"/>
</dbReference>
<dbReference type="GO" id="GO:0006508">
    <property type="term" value="P:proteolysis"/>
    <property type="evidence" value="ECO:0007669"/>
    <property type="project" value="UniProtKB-KW"/>
</dbReference>
<dbReference type="CDD" id="cd00190">
    <property type="entry name" value="Tryp_SPc"/>
    <property type="match status" value="1"/>
</dbReference>
<dbReference type="FunFam" id="2.40.10.10:FF:000158">
    <property type="entry name" value="Thrombin-like enzyme saxthrombin"/>
    <property type="match status" value="1"/>
</dbReference>
<dbReference type="FunFam" id="2.40.10.10:FF:000153">
    <property type="entry name" value="Venom plasminogen activator TSV-PA"/>
    <property type="match status" value="1"/>
</dbReference>
<dbReference type="Gene3D" id="2.40.10.10">
    <property type="entry name" value="Trypsin-like serine proteases"/>
    <property type="match status" value="2"/>
</dbReference>
<dbReference type="InterPro" id="IPR009003">
    <property type="entry name" value="Peptidase_S1_PA"/>
</dbReference>
<dbReference type="InterPro" id="IPR043504">
    <property type="entry name" value="Peptidase_S1_PA_chymotrypsin"/>
</dbReference>
<dbReference type="InterPro" id="IPR001314">
    <property type="entry name" value="Peptidase_S1A"/>
</dbReference>
<dbReference type="InterPro" id="IPR001254">
    <property type="entry name" value="Trypsin_dom"/>
</dbReference>
<dbReference type="InterPro" id="IPR018114">
    <property type="entry name" value="TRYPSIN_HIS"/>
</dbReference>
<dbReference type="InterPro" id="IPR033116">
    <property type="entry name" value="TRYPSIN_SER"/>
</dbReference>
<dbReference type="PANTHER" id="PTHR24271:SF47">
    <property type="entry name" value="KALLIKREIN-1"/>
    <property type="match status" value="1"/>
</dbReference>
<dbReference type="PANTHER" id="PTHR24271">
    <property type="entry name" value="KALLIKREIN-RELATED"/>
    <property type="match status" value="1"/>
</dbReference>
<dbReference type="Pfam" id="PF00089">
    <property type="entry name" value="Trypsin"/>
    <property type="match status" value="1"/>
</dbReference>
<dbReference type="PRINTS" id="PR00722">
    <property type="entry name" value="CHYMOTRYPSIN"/>
</dbReference>
<dbReference type="SMART" id="SM00020">
    <property type="entry name" value="Tryp_SPc"/>
    <property type="match status" value="1"/>
</dbReference>
<dbReference type="SUPFAM" id="SSF50494">
    <property type="entry name" value="Trypsin-like serine proteases"/>
    <property type="match status" value="1"/>
</dbReference>
<dbReference type="PROSITE" id="PS50240">
    <property type="entry name" value="TRYPSIN_DOM"/>
    <property type="match status" value="1"/>
</dbReference>
<dbReference type="PROSITE" id="PS00134">
    <property type="entry name" value="TRYPSIN_HIS"/>
    <property type="match status" value="1"/>
</dbReference>
<dbReference type="PROSITE" id="PS00135">
    <property type="entry name" value="TRYPSIN_SER"/>
    <property type="match status" value="1"/>
</dbReference>